<comment type="catalytic activity">
    <reaction evidence="1">
        <text>tRNA(Gln) + L-glutamine + ATP = L-glutaminyl-tRNA(Gln) + AMP + diphosphate</text>
        <dbReference type="Rhea" id="RHEA:20121"/>
        <dbReference type="Rhea" id="RHEA-COMP:9662"/>
        <dbReference type="Rhea" id="RHEA-COMP:9681"/>
        <dbReference type="ChEBI" id="CHEBI:30616"/>
        <dbReference type="ChEBI" id="CHEBI:33019"/>
        <dbReference type="ChEBI" id="CHEBI:58359"/>
        <dbReference type="ChEBI" id="CHEBI:78442"/>
        <dbReference type="ChEBI" id="CHEBI:78521"/>
        <dbReference type="ChEBI" id="CHEBI:456215"/>
        <dbReference type="EC" id="6.1.1.18"/>
    </reaction>
</comment>
<comment type="subunit">
    <text evidence="1">Monomer.</text>
</comment>
<comment type="subcellular location">
    <subcellularLocation>
        <location evidence="1">Cytoplasm</location>
    </subcellularLocation>
</comment>
<comment type="similarity">
    <text evidence="1">Belongs to the class-I aminoacyl-tRNA synthetase family.</text>
</comment>
<gene>
    <name evidence="1" type="primary">glnS</name>
    <name type="ordered locus">Nwi_1843</name>
</gene>
<reference key="1">
    <citation type="journal article" date="2006" name="Appl. Environ. Microbiol.">
        <title>Genome sequence of the chemolithoautotrophic nitrite-oxidizing bacterium Nitrobacter winogradskyi Nb-255.</title>
        <authorList>
            <person name="Starkenburg S.R."/>
            <person name="Chain P.S.G."/>
            <person name="Sayavedra-Soto L.A."/>
            <person name="Hauser L."/>
            <person name="Land M.L."/>
            <person name="Larimer F.W."/>
            <person name="Malfatti S.A."/>
            <person name="Klotz M.G."/>
            <person name="Bottomley P.J."/>
            <person name="Arp D.J."/>
            <person name="Hickey W.J."/>
        </authorList>
    </citation>
    <scope>NUCLEOTIDE SEQUENCE [LARGE SCALE GENOMIC DNA]</scope>
    <source>
        <strain>ATCC 25391 / DSM 10237 / CIP 104748 / NCIMB 11846 / Nb-255</strain>
    </source>
</reference>
<evidence type="ECO:0000255" key="1">
    <source>
        <dbReference type="HAMAP-Rule" id="MF_00126"/>
    </source>
</evidence>
<sequence length="559" mass="63415">MTDESTAEAGRDFIRDIVAADLASGRHKSIVTRFPPEPNGYLHLGHAKSICLNFGIAEDFGGRCHLRFDDTNPAKEEQEFIDAIQRDVRWLGFDWGEHLYYASDYFEQLYAWAQHLIREGKAYVDDQTQEEIRLARGTLTEPGRNSPFRDRPADENLDLFARMRAGEFPNGARVLRAKIDMAAGNINLRDPVLYRILHATHPRTGNVWSIYPSYDFAHGQSDSIEHITHSVCTLEFEDHRPLYDWFLDNLPVPSRPRQYEFARLNVTHTLLSKRVLTELVRGGHVAGWDDPRMPTLAGLQRRGVPAEALREFVKRIGVAKANSTVDVGMLDFAIREALNRSASRRMAVLRPLKVVIENYPEGQSEELEAVNHPDDPSQGTRRIRFGREIYIEQEDFMENPPKKFFRLSPGREVRLRYAYFITCREVVKNPAGDVLELRCTYDPATRGGNAPDGRKVKATMHWVNTADAVPAEVRLYGHLFETEQPDAANFASELNPQSVQILSGCMVEPALARDDAGAAVQFERQGYFYRDRDSAPGRLVFNRTVGLRDTWAKVAAAGS</sequence>
<feature type="chain" id="PRO_1000095495" description="Glutamine--tRNA ligase">
    <location>
        <begin position="1"/>
        <end position="559"/>
    </location>
</feature>
<feature type="short sequence motif" description="'HIGH' region" evidence="1">
    <location>
        <begin position="36"/>
        <end position="46"/>
    </location>
</feature>
<feature type="short sequence motif" description="'KMSKS' region" evidence="1">
    <location>
        <begin position="270"/>
        <end position="274"/>
    </location>
</feature>
<feature type="binding site" evidence="1">
    <location>
        <begin position="37"/>
        <end position="39"/>
    </location>
    <ligand>
        <name>ATP</name>
        <dbReference type="ChEBI" id="CHEBI:30616"/>
    </ligand>
</feature>
<feature type="binding site" evidence="1">
    <location>
        <begin position="43"/>
        <end position="49"/>
    </location>
    <ligand>
        <name>ATP</name>
        <dbReference type="ChEBI" id="CHEBI:30616"/>
    </ligand>
</feature>
<feature type="binding site" evidence="1">
    <location>
        <position position="69"/>
    </location>
    <ligand>
        <name>L-glutamine</name>
        <dbReference type="ChEBI" id="CHEBI:58359"/>
    </ligand>
</feature>
<feature type="binding site" evidence="1">
    <location>
        <position position="214"/>
    </location>
    <ligand>
        <name>L-glutamine</name>
        <dbReference type="ChEBI" id="CHEBI:58359"/>
    </ligand>
</feature>
<feature type="binding site" evidence="1">
    <location>
        <position position="233"/>
    </location>
    <ligand>
        <name>ATP</name>
        <dbReference type="ChEBI" id="CHEBI:30616"/>
    </ligand>
</feature>
<feature type="binding site" evidence="1">
    <location>
        <begin position="263"/>
        <end position="264"/>
    </location>
    <ligand>
        <name>ATP</name>
        <dbReference type="ChEBI" id="CHEBI:30616"/>
    </ligand>
</feature>
<feature type="binding site" evidence="1">
    <location>
        <begin position="271"/>
        <end position="273"/>
    </location>
    <ligand>
        <name>ATP</name>
        <dbReference type="ChEBI" id="CHEBI:30616"/>
    </ligand>
</feature>
<dbReference type="EC" id="6.1.1.18" evidence="1"/>
<dbReference type="EMBL" id="CP000115">
    <property type="protein sequence ID" value="ABA05103.1"/>
    <property type="molecule type" value="Genomic_DNA"/>
</dbReference>
<dbReference type="RefSeq" id="WP_011315099.1">
    <property type="nucleotide sequence ID" value="NC_007406.1"/>
</dbReference>
<dbReference type="SMR" id="Q3SRI8"/>
<dbReference type="STRING" id="323098.Nwi_1843"/>
<dbReference type="KEGG" id="nwi:Nwi_1843"/>
<dbReference type="eggNOG" id="COG0008">
    <property type="taxonomic scope" value="Bacteria"/>
</dbReference>
<dbReference type="HOGENOM" id="CLU_001882_2_3_5"/>
<dbReference type="OrthoDB" id="9807503at2"/>
<dbReference type="Proteomes" id="UP000002531">
    <property type="component" value="Chromosome"/>
</dbReference>
<dbReference type="GO" id="GO:0005829">
    <property type="term" value="C:cytosol"/>
    <property type="evidence" value="ECO:0007669"/>
    <property type="project" value="TreeGrafter"/>
</dbReference>
<dbReference type="GO" id="GO:0005524">
    <property type="term" value="F:ATP binding"/>
    <property type="evidence" value="ECO:0007669"/>
    <property type="project" value="UniProtKB-UniRule"/>
</dbReference>
<dbReference type="GO" id="GO:0004819">
    <property type="term" value="F:glutamine-tRNA ligase activity"/>
    <property type="evidence" value="ECO:0007669"/>
    <property type="project" value="UniProtKB-UniRule"/>
</dbReference>
<dbReference type="GO" id="GO:0006425">
    <property type="term" value="P:glutaminyl-tRNA aminoacylation"/>
    <property type="evidence" value="ECO:0007669"/>
    <property type="project" value="InterPro"/>
</dbReference>
<dbReference type="GO" id="GO:0006424">
    <property type="term" value="P:glutamyl-tRNA aminoacylation"/>
    <property type="evidence" value="ECO:0007669"/>
    <property type="project" value="UniProtKB-UniRule"/>
</dbReference>
<dbReference type="CDD" id="cd00807">
    <property type="entry name" value="GlnRS_core"/>
    <property type="match status" value="1"/>
</dbReference>
<dbReference type="FunFam" id="1.10.1160.10:FF:000001">
    <property type="entry name" value="Glutamine--tRNA ligase"/>
    <property type="match status" value="1"/>
</dbReference>
<dbReference type="FunFam" id="2.40.240.10:FF:000001">
    <property type="entry name" value="Glutamine--tRNA ligase"/>
    <property type="match status" value="1"/>
</dbReference>
<dbReference type="FunFam" id="3.90.800.10:FF:000001">
    <property type="entry name" value="Glutamine--tRNA ligase"/>
    <property type="match status" value="1"/>
</dbReference>
<dbReference type="FunFam" id="3.40.50.620:FF:000037">
    <property type="entry name" value="Glutamine--tRNA ligase cytoplasmic"/>
    <property type="match status" value="1"/>
</dbReference>
<dbReference type="Gene3D" id="1.10.1160.10">
    <property type="entry name" value="Glutamyl-trna Synthetase, Domain 2"/>
    <property type="match status" value="1"/>
</dbReference>
<dbReference type="Gene3D" id="3.90.800.10">
    <property type="entry name" value="Glutamyl-tRNA Synthetase, Domain 3"/>
    <property type="match status" value="1"/>
</dbReference>
<dbReference type="Gene3D" id="3.40.50.620">
    <property type="entry name" value="HUPs"/>
    <property type="match status" value="1"/>
</dbReference>
<dbReference type="Gene3D" id="2.40.240.10">
    <property type="entry name" value="Ribosomal Protein L25, Chain P"/>
    <property type="match status" value="2"/>
</dbReference>
<dbReference type="HAMAP" id="MF_00126">
    <property type="entry name" value="Gln_tRNA_synth"/>
    <property type="match status" value="1"/>
</dbReference>
<dbReference type="InterPro" id="IPR001412">
    <property type="entry name" value="aa-tRNA-synth_I_CS"/>
</dbReference>
<dbReference type="InterPro" id="IPR004514">
    <property type="entry name" value="Gln-tRNA-synth"/>
</dbReference>
<dbReference type="InterPro" id="IPR050132">
    <property type="entry name" value="Gln/Glu-tRNA_Ligase"/>
</dbReference>
<dbReference type="InterPro" id="IPR022861">
    <property type="entry name" value="Gln_tRNA_ligase_bac"/>
</dbReference>
<dbReference type="InterPro" id="IPR000924">
    <property type="entry name" value="Glu/Gln-tRNA-synth"/>
</dbReference>
<dbReference type="InterPro" id="IPR020058">
    <property type="entry name" value="Glu/Gln-tRNA-synth_Ib_cat-dom"/>
</dbReference>
<dbReference type="InterPro" id="IPR020059">
    <property type="entry name" value="Glu/Gln-tRNA-synth_Ib_codon-bd"/>
</dbReference>
<dbReference type="InterPro" id="IPR020061">
    <property type="entry name" value="Glu_tRNA_lig_a-bdl"/>
</dbReference>
<dbReference type="InterPro" id="IPR020056">
    <property type="entry name" value="Rbsml_bL25/Gln-tRNA_synth_N"/>
</dbReference>
<dbReference type="InterPro" id="IPR011035">
    <property type="entry name" value="Ribosomal_bL25/Gln-tRNA_synth"/>
</dbReference>
<dbReference type="InterPro" id="IPR014729">
    <property type="entry name" value="Rossmann-like_a/b/a_fold"/>
</dbReference>
<dbReference type="InterPro" id="IPR049437">
    <property type="entry name" value="tRNA-synt_1c_C2"/>
</dbReference>
<dbReference type="NCBIfam" id="TIGR00440">
    <property type="entry name" value="glnS"/>
    <property type="match status" value="1"/>
</dbReference>
<dbReference type="NCBIfam" id="NF011291">
    <property type="entry name" value="PRK14703.1"/>
    <property type="match status" value="1"/>
</dbReference>
<dbReference type="PANTHER" id="PTHR43097:SF5">
    <property type="entry name" value="GLUTAMATE--TRNA LIGASE"/>
    <property type="match status" value="1"/>
</dbReference>
<dbReference type="PANTHER" id="PTHR43097">
    <property type="entry name" value="GLUTAMINE-TRNA LIGASE"/>
    <property type="match status" value="1"/>
</dbReference>
<dbReference type="Pfam" id="PF00749">
    <property type="entry name" value="tRNA-synt_1c"/>
    <property type="match status" value="1"/>
</dbReference>
<dbReference type="Pfam" id="PF03950">
    <property type="entry name" value="tRNA-synt_1c_C"/>
    <property type="match status" value="1"/>
</dbReference>
<dbReference type="Pfam" id="PF20974">
    <property type="entry name" value="tRNA-synt_1c_C2"/>
    <property type="match status" value="1"/>
</dbReference>
<dbReference type="PRINTS" id="PR00987">
    <property type="entry name" value="TRNASYNTHGLU"/>
</dbReference>
<dbReference type="SUPFAM" id="SSF52374">
    <property type="entry name" value="Nucleotidylyl transferase"/>
    <property type="match status" value="1"/>
</dbReference>
<dbReference type="SUPFAM" id="SSF50715">
    <property type="entry name" value="Ribosomal protein L25-like"/>
    <property type="match status" value="1"/>
</dbReference>
<dbReference type="PROSITE" id="PS00178">
    <property type="entry name" value="AA_TRNA_LIGASE_I"/>
    <property type="match status" value="1"/>
</dbReference>
<name>SYQ_NITWN</name>
<organism>
    <name type="scientific">Nitrobacter winogradskyi (strain ATCC 25391 / DSM 10237 / CIP 104748 / NCIMB 11846 / Nb-255)</name>
    <dbReference type="NCBI Taxonomy" id="323098"/>
    <lineage>
        <taxon>Bacteria</taxon>
        <taxon>Pseudomonadati</taxon>
        <taxon>Pseudomonadota</taxon>
        <taxon>Alphaproteobacteria</taxon>
        <taxon>Hyphomicrobiales</taxon>
        <taxon>Nitrobacteraceae</taxon>
        <taxon>Nitrobacter</taxon>
    </lineage>
</organism>
<accession>Q3SRI8</accession>
<proteinExistence type="inferred from homology"/>
<protein>
    <recommendedName>
        <fullName evidence="1">Glutamine--tRNA ligase</fullName>
        <ecNumber evidence="1">6.1.1.18</ecNumber>
    </recommendedName>
    <alternativeName>
        <fullName evidence="1">Glutaminyl-tRNA synthetase</fullName>
        <shortName evidence="1">GlnRS</shortName>
    </alternativeName>
</protein>
<keyword id="KW-0030">Aminoacyl-tRNA synthetase</keyword>
<keyword id="KW-0067">ATP-binding</keyword>
<keyword id="KW-0963">Cytoplasm</keyword>
<keyword id="KW-0436">Ligase</keyword>
<keyword id="KW-0547">Nucleotide-binding</keyword>
<keyword id="KW-0648">Protein biosynthesis</keyword>
<keyword id="KW-1185">Reference proteome</keyword>